<accession>P0CH77</accession>
<reference key="1">
    <citation type="journal article" date="2010" name="J. Proteome Res.">
        <title>Molecular diversification of peptide toxins from the tarantula Haplopelma hainanum (Ornithoctonus hainana) venom based on transcriptomic, peptidomic, and genomic analyses.</title>
        <authorList>
            <person name="Tang X."/>
            <person name="Zhang Y."/>
            <person name="Hu W."/>
            <person name="Xu D."/>
            <person name="Tao H."/>
            <person name="Yang X."/>
            <person name="Li Y."/>
            <person name="Jiang L."/>
            <person name="Liang S."/>
        </authorList>
    </citation>
    <scope>PROTEIN SEQUENCE</scope>
    <scope>IDENTIFICATION BY MASS SPECTROMETRY</scope>
    <source>
        <tissue>Venom</tissue>
    </source>
</reference>
<proteinExistence type="evidence at protein level"/>
<sequence>FECSVSCEIEKEGNKDCKKKKCKGGWKCKFNMCVKDI</sequence>
<feature type="peptide" id="PRO_0000400827" description="U4-theraphotoxin-Hhn1v">
    <location>
        <begin position="1"/>
        <end position="37"/>
    </location>
</feature>
<feature type="disulfide bond" evidence="1">
    <location>
        <begin position="3"/>
        <end position="17"/>
    </location>
</feature>
<feature type="disulfide bond" evidence="1">
    <location>
        <begin position="7"/>
        <end position="28"/>
    </location>
</feature>
<feature type="disulfide bond" evidence="1">
    <location>
        <begin position="22"/>
        <end position="33"/>
    </location>
</feature>
<comment type="function">
    <text evidence="1">Postsynaptic neurotoxin.</text>
</comment>
<comment type="subcellular location">
    <subcellularLocation>
        <location>Secreted</location>
    </subcellularLocation>
</comment>
<comment type="tissue specificity">
    <text>Expressed by the venom gland.</text>
</comment>
<comment type="domain">
    <text evidence="1">The presence of a 'disulfide through disulfide knot' structurally defines this protein as a knottin.</text>
</comment>
<comment type="similarity">
    <text evidence="2">Belongs to the neurotoxin 12 (Hwtx-2) family. 02 (Hwtx-2) subfamily.</text>
</comment>
<dbReference type="SMR" id="P0CH77"/>
<dbReference type="ArachnoServer" id="AS001533">
    <property type="toxin name" value="U4-theraphotoxin-Hhn1v"/>
</dbReference>
<dbReference type="GO" id="GO:0005576">
    <property type="term" value="C:extracellular region"/>
    <property type="evidence" value="ECO:0007669"/>
    <property type="project" value="UniProtKB-SubCell"/>
</dbReference>
<dbReference type="GO" id="GO:0035792">
    <property type="term" value="C:host cell postsynaptic membrane"/>
    <property type="evidence" value="ECO:0007669"/>
    <property type="project" value="UniProtKB-KW"/>
</dbReference>
<dbReference type="GO" id="GO:0090729">
    <property type="term" value="F:toxin activity"/>
    <property type="evidence" value="ECO:0007669"/>
    <property type="project" value="UniProtKB-KW"/>
</dbReference>
<dbReference type="InterPro" id="IPR012625">
    <property type="entry name" value="Hwtx-2-like"/>
</dbReference>
<dbReference type="Pfam" id="PF08089">
    <property type="entry name" value="Toxin_20"/>
    <property type="match status" value="1"/>
</dbReference>
<dbReference type="SUPFAM" id="SSF57059">
    <property type="entry name" value="omega toxin-like"/>
    <property type="match status" value="1"/>
</dbReference>
<dbReference type="PROSITE" id="PS60022">
    <property type="entry name" value="HWTX_2"/>
    <property type="match status" value="1"/>
</dbReference>
<evidence type="ECO:0000250" key="1"/>
<evidence type="ECO:0000305" key="2"/>
<protein>
    <recommendedName>
        <fullName>U4-theraphotoxin-Hhn1v</fullName>
        <shortName>U4-TRTX-Hhn1v</shortName>
    </recommendedName>
    <alternativeName>
        <fullName>Hainantoxin F8-17.06</fullName>
    </alternativeName>
    <alternativeName>
        <fullName>Peptide F8-17.06</fullName>
    </alternativeName>
</protein>
<name>HN817_CYRHA</name>
<keyword id="KW-0903">Direct protein sequencing</keyword>
<keyword id="KW-1015">Disulfide bond</keyword>
<keyword id="KW-0528">Neurotoxin</keyword>
<keyword id="KW-0629">Postsynaptic neurotoxin</keyword>
<keyword id="KW-0964">Secreted</keyword>
<keyword id="KW-0800">Toxin</keyword>
<organism>
    <name type="scientific">Cyriopagopus hainanus</name>
    <name type="common">Chinese bird spider</name>
    <name type="synonym">Haplopelma hainanum</name>
    <dbReference type="NCBI Taxonomy" id="209901"/>
    <lineage>
        <taxon>Eukaryota</taxon>
        <taxon>Metazoa</taxon>
        <taxon>Ecdysozoa</taxon>
        <taxon>Arthropoda</taxon>
        <taxon>Chelicerata</taxon>
        <taxon>Arachnida</taxon>
        <taxon>Araneae</taxon>
        <taxon>Mygalomorphae</taxon>
        <taxon>Theraphosidae</taxon>
        <taxon>Haplopelma</taxon>
    </lineage>
</organism>